<feature type="chain" id="PRO_0000176940" description="Transcription elongation factor GreA">
    <location>
        <begin position="1"/>
        <end position="164"/>
    </location>
</feature>
<feature type="coiled-coil region" evidence="1">
    <location>
        <begin position="50"/>
        <end position="75"/>
    </location>
</feature>
<proteinExistence type="inferred from homology"/>
<name>GREA_MYCLE</name>
<keyword id="KW-0175">Coiled coil</keyword>
<keyword id="KW-0238">DNA-binding</keyword>
<keyword id="KW-1185">Reference proteome</keyword>
<keyword id="KW-0804">Transcription</keyword>
<keyword id="KW-0805">Transcription regulation</keyword>
<accession>P46808</accession>
<dbReference type="EMBL" id="U15183">
    <property type="protein sequence ID" value="AAA63039.1"/>
    <property type="status" value="ALT_INIT"/>
    <property type="molecule type" value="Genomic_DNA"/>
</dbReference>
<dbReference type="EMBL" id="AL583925">
    <property type="protein sequence ID" value="CAC31909.1"/>
    <property type="molecule type" value="Genomic_DNA"/>
</dbReference>
<dbReference type="PIR" id="E87208">
    <property type="entry name" value="E87208"/>
</dbReference>
<dbReference type="RefSeq" id="NP_302549.1">
    <property type="nucleotide sequence ID" value="NC_002677.1"/>
</dbReference>
<dbReference type="RefSeq" id="WP_010908869.1">
    <property type="nucleotide sequence ID" value="NC_002677.1"/>
</dbReference>
<dbReference type="SMR" id="P46808"/>
<dbReference type="STRING" id="272631.gene:17576255"/>
<dbReference type="KEGG" id="mle:ML2393"/>
<dbReference type="PATRIC" id="fig|272631.5.peg.4606"/>
<dbReference type="Leproma" id="ML2393"/>
<dbReference type="eggNOG" id="COG0782">
    <property type="taxonomic scope" value="Bacteria"/>
</dbReference>
<dbReference type="HOGENOM" id="CLU_101379_0_0_11"/>
<dbReference type="OrthoDB" id="9797227at2"/>
<dbReference type="Proteomes" id="UP000000806">
    <property type="component" value="Chromosome"/>
</dbReference>
<dbReference type="GO" id="GO:0003677">
    <property type="term" value="F:DNA binding"/>
    <property type="evidence" value="ECO:0007669"/>
    <property type="project" value="UniProtKB-UniRule"/>
</dbReference>
<dbReference type="GO" id="GO:0070063">
    <property type="term" value="F:RNA polymerase binding"/>
    <property type="evidence" value="ECO:0007669"/>
    <property type="project" value="InterPro"/>
</dbReference>
<dbReference type="GO" id="GO:0006354">
    <property type="term" value="P:DNA-templated transcription elongation"/>
    <property type="evidence" value="ECO:0007669"/>
    <property type="project" value="TreeGrafter"/>
</dbReference>
<dbReference type="GO" id="GO:0032784">
    <property type="term" value="P:regulation of DNA-templated transcription elongation"/>
    <property type="evidence" value="ECO:0007669"/>
    <property type="project" value="UniProtKB-UniRule"/>
</dbReference>
<dbReference type="FunFam" id="1.10.287.180:FF:000001">
    <property type="entry name" value="Transcription elongation factor GreA"/>
    <property type="match status" value="1"/>
</dbReference>
<dbReference type="FunFam" id="3.10.50.30:FF:000003">
    <property type="entry name" value="Transcription elongation factor GreA"/>
    <property type="match status" value="1"/>
</dbReference>
<dbReference type="Gene3D" id="3.10.50.30">
    <property type="entry name" value="Transcription elongation factor, GreA/GreB, C-terminal domain"/>
    <property type="match status" value="1"/>
</dbReference>
<dbReference type="Gene3D" id="1.10.287.180">
    <property type="entry name" value="Transcription elongation factor, GreA/GreB, N-terminal domain"/>
    <property type="match status" value="1"/>
</dbReference>
<dbReference type="HAMAP" id="MF_00105">
    <property type="entry name" value="GreA_GreB"/>
    <property type="match status" value="1"/>
</dbReference>
<dbReference type="InterPro" id="IPR036953">
    <property type="entry name" value="GreA/GreB_C_sf"/>
</dbReference>
<dbReference type="InterPro" id="IPR018151">
    <property type="entry name" value="TF_GreA/GreB_CS"/>
</dbReference>
<dbReference type="InterPro" id="IPR006359">
    <property type="entry name" value="Tscrpt_elong_fac_GreA"/>
</dbReference>
<dbReference type="InterPro" id="IPR028624">
    <property type="entry name" value="Tscrpt_elong_fac_GreA/B"/>
</dbReference>
<dbReference type="InterPro" id="IPR001437">
    <property type="entry name" value="Tscrpt_elong_fac_GreA/B_C"/>
</dbReference>
<dbReference type="InterPro" id="IPR023459">
    <property type="entry name" value="Tscrpt_elong_fac_GreA/B_fam"/>
</dbReference>
<dbReference type="InterPro" id="IPR022691">
    <property type="entry name" value="Tscrpt_elong_fac_GreA/B_N"/>
</dbReference>
<dbReference type="InterPro" id="IPR036805">
    <property type="entry name" value="Tscrpt_elong_fac_GreA/B_N_sf"/>
</dbReference>
<dbReference type="NCBIfam" id="TIGR01462">
    <property type="entry name" value="greA"/>
    <property type="match status" value="1"/>
</dbReference>
<dbReference type="NCBIfam" id="NF001262">
    <property type="entry name" value="PRK00226.1-3"/>
    <property type="match status" value="1"/>
</dbReference>
<dbReference type="PANTHER" id="PTHR30437">
    <property type="entry name" value="TRANSCRIPTION ELONGATION FACTOR GREA"/>
    <property type="match status" value="1"/>
</dbReference>
<dbReference type="PANTHER" id="PTHR30437:SF4">
    <property type="entry name" value="TRANSCRIPTION ELONGATION FACTOR GREA"/>
    <property type="match status" value="1"/>
</dbReference>
<dbReference type="Pfam" id="PF01272">
    <property type="entry name" value="GreA_GreB"/>
    <property type="match status" value="1"/>
</dbReference>
<dbReference type="Pfam" id="PF03449">
    <property type="entry name" value="GreA_GreB_N"/>
    <property type="match status" value="1"/>
</dbReference>
<dbReference type="PIRSF" id="PIRSF006092">
    <property type="entry name" value="GreA_GreB"/>
    <property type="match status" value="1"/>
</dbReference>
<dbReference type="SUPFAM" id="SSF54534">
    <property type="entry name" value="FKBP-like"/>
    <property type="match status" value="1"/>
</dbReference>
<dbReference type="SUPFAM" id="SSF46557">
    <property type="entry name" value="GreA transcript cleavage protein, N-terminal domain"/>
    <property type="match status" value="1"/>
</dbReference>
<dbReference type="PROSITE" id="PS00829">
    <property type="entry name" value="GREAB_1"/>
    <property type="match status" value="1"/>
</dbReference>
<dbReference type="PROSITE" id="PS00830">
    <property type="entry name" value="GREAB_2"/>
    <property type="match status" value="1"/>
</dbReference>
<reference key="1">
    <citation type="submission" date="1994-09" db="EMBL/GenBank/DDBJ databases">
        <authorList>
            <person name="Smith D.R."/>
            <person name="Robison K."/>
        </authorList>
    </citation>
    <scope>NUCLEOTIDE SEQUENCE [GENOMIC DNA]</scope>
</reference>
<reference key="2">
    <citation type="journal article" date="2001" name="Nature">
        <title>Massive gene decay in the leprosy bacillus.</title>
        <authorList>
            <person name="Cole S.T."/>
            <person name="Eiglmeier K."/>
            <person name="Parkhill J."/>
            <person name="James K.D."/>
            <person name="Thomson N.R."/>
            <person name="Wheeler P.R."/>
            <person name="Honore N."/>
            <person name="Garnier T."/>
            <person name="Churcher C.M."/>
            <person name="Harris D.E."/>
            <person name="Mungall K.L."/>
            <person name="Basham D."/>
            <person name="Brown D."/>
            <person name="Chillingworth T."/>
            <person name="Connor R."/>
            <person name="Davies R.M."/>
            <person name="Devlin K."/>
            <person name="Duthoy S."/>
            <person name="Feltwell T."/>
            <person name="Fraser A."/>
            <person name="Hamlin N."/>
            <person name="Holroyd S."/>
            <person name="Hornsby T."/>
            <person name="Jagels K."/>
            <person name="Lacroix C."/>
            <person name="Maclean J."/>
            <person name="Moule S."/>
            <person name="Murphy L.D."/>
            <person name="Oliver K."/>
            <person name="Quail M.A."/>
            <person name="Rajandream M.A."/>
            <person name="Rutherford K.M."/>
            <person name="Rutter S."/>
            <person name="Seeger K."/>
            <person name="Simon S."/>
            <person name="Simmonds M."/>
            <person name="Skelton J."/>
            <person name="Squares R."/>
            <person name="Squares S."/>
            <person name="Stevens K."/>
            <person name="Taylor K."/>
            <person name="Whitehead S."/>
            <person name="Woodward J.R."/>
            <person name="Barrell B.G."/>
        </authorList>
    </citation>
    <scope>NUCLEOTIDE SEQUENCE [LARGE SCALE GENOMIC DNA]</scope>
    <source>
        <strain>TN</strain>
    </source>
</reference>
<sequence>MTDTQVTWLTQESHDRLKAELDQLIANRPVIAAEINDRREEGDLRENGGYHAAREEQGQQEARIRQLQDLLNIAKVGEAPKQSGVALPGSVVKVYYNDDKSDTETFLIATRQEGVNEGKLEVYSPNSPLGGALIDAKVGETRSYTVPNGNTVQVTLISAEPYHS</sequence>
<organism>
    <name type="scientific">Mycobacterium leprae (strain TN)</name>
    <dbReference type="NCBI Taxonomy" id="272631"/>
    <lineage>
        <taxon>Bacteria</taxon>
        <taxon>Bacillati</taxon>
        <taxon>Actinomycetota</taxon>
        <taxon>Actinomycetes</taxon>
        <taxon>Mycobacteriales</taxon>
        <taxon>Mycobacteriaceae</taxon>
        <taxon>Mycobacterium</taxon>
    </lineage>
</organism>
<gene>
    <name evidence="1" type="primary">greA</name>
    <name type="ordered locus">ML2393</name>
</gene>
<evidence type="ECO:0000255" key="1">
    <source>
        <dbReference type="HAMAP-Rule" id="MF_00105"/>
    </source>
</evidence>
<evidence type="ECO:0000305" key="2"/>
<protein>
    <recommendedName>
        <fullName evidence="1">Transcription elongation factor GreA</fullName>
    </recommendedName>
    <alternativeName>
        <fullName evidence="1">Transcript cleavage factor GreA</fullName>
    </alternativeName>
</protein>
<comment type="function">
    <text evidence="1">Necessary for efficient RNA polymerase transcription elongation past template-encoded arresting sites. The arresting sites in DNA have the property of trapping a certain fraction of elongating RNA polymerases that pass through, resulting in locked ternary complexes. Cleavage of the nascent transcript by cleavage factors such as GreA or GreB allows the resumption of elongation from the new 3'terminus. GreA releases sequences of 2 to 3 nucleotides.</text>
</comment>
<comment type="similarity">
    <text evidence="1">Belongs to the GreA/GreB family.</text>
</comment>
<comment type="sequence caution" evidence="2">
    <conflict type="erroneous initiation">
        <sequence resource="EMBL-CDS" id="AAA63039"/>
    </conflict>
</comment>